<dbReference type="EMBL" id="CP000962">
    <property type="protein sequence ID" value="ACA56992.1"/>
    <property type="molecule type" value="Genomic_DNA"/>
</dbReference>
<dbReference type="RefSeq" id="WP_012344790.1">
    <property type="nucleotide sequence ID" value="NC_010520.1"/>
</dbReference>
<dbReference type="SMR" id="B1L1D6"/>
<dbReference type="KEGG" id="cbl:CLK_2628"/>
<dbReference type="HOGENOM" id="CLU_014218_8_2_9"/>
<dbReference type="GO" id="GO:0009376">
    <property type="term" value="C:HslUV protease complex"/>
    <property type="evidence" value="ECO:0007669"/>
    <property type="project" value="TreeGrafter"/>
</dbReference>
<dbReference type="GO" id="GO:0005524">
    <property type="term" value="F:ATP binding"/>
    <property type="evidence" value="ECO:0007669"/>
    <property type="project" value="UniProtKB-UniRule"/>
</dbReference>
<dbReference type="GO" id="GO:0016887">
    <property type="term" value="F:ATP hydrolysis activity"/>
    <property type="evidence" value="ECO:0007669"/>
    <property type="project" value="InterPro"/>
</dbReference>
<dbReference type="GO" id="GO:0140662">
    <property type="term" value="F:ATP-dependent protein folding chaperone"/>
    <property type="evidence" value="ECO:0007669"/>
    <property type="project" value="InterPro"/>
</dbReference>
<dbReference type="GO" id="GO:0046983">
    <property type="term" value="F:protein dimerization activity"/>
    <property type="evidence" value="ECO:0007669"/>
    <property type="project" value="InterPro"/>
</dbReference>
<dbReference type="GO" id="GO:0051082">
    <property type="term" value="F:unfolded protein binding"/>
    <property type="evidence" value="ECO:0007669"/>
    <property type="project" value="UniProtKB-UniRule"/>
</dbReference>
<dbReference type="GO" id="GO:0008270">
    <property type="term" value="F:zinc ion binding"/>
    <property type="evidence" value="ECO:0007669"/>
    <property type="project" value="InterPro"/>
</dbReference>
<dbReference type="GO" id="GO:0051301">
    <property type="term" value="P:cell division"/>
    <property type="evidence" value="ECO:0007669"/>
    <property type="project" value="TreeGrafter"/>
</dbReference>
<dbReference type="GO" id="GO:0051603">
    <property type="term" value="P:proteolysis involved in protein catabolic process"/>
    <property type="evidence" value="ECO:0007669"/>
    <property type="project" value="TreeGrafter"/>
</dbReference>
<dbReference type="CDD" id="cd19497">
    <property type="entry name" value="RecA-like_ClpX"/>
    <property type="match status" value="1"/>
</dbReference>
<dbReference type="FunFam" id="1.10.8.60:FF:000002">
    <property type="entry name" value="ATP-dependent Clp protease ATP-binding subunit ClpX"/>
    <property type="match status" value="1"/>
</dbReference>
<dbReference type="FunFam" id="3.40.50.300:FF:000005">
    <property type="entry name" value="ATP-dependent Clp protease ATP-binding subunit ClpX"/>
    <property type="match status" value="1"/>
</dbReference>
<dbReference type="Gene3D" id="1.10.8.60">
    <property type="match status" value="1"/>
</dbReference>
<dbReference type="Gene3D" id="6.20.220.10">
    <property type="entry name" value="ClpX chaperone, C4-type zinc finger domain"/>
    <property type="match status" value="1"/>
</dbReference>
<dbReference type="Gene3D" id="3.40.50.300">
    <property type="entry name" value="P-loop containing nucleotide triphosphate hydrolases"/>
    <property type="match status" value="1"/>
</dbReference>
<dbReference type="HAMAP" id="MF_00175">
    <property type="entry name" value="ClpX"/>
    <property type="match status" value="1"/>
</dbReference>
<dbReference type="InterPro" id="IPR003593">
    <property type="entry name" value="AAA+_ATPase"/>
</dbReference>
<dbReference type="InterPro" id="IPR050052">
    <property type="entry name" value="ATP-dep_Clp_protease_ClpX"/>
</dbReference>
<dbReference type="InterPro" id="IPR003959">
    <property type="entry name" value="ATPase_AAA_core"/>
</dbReference>
<dbReference type="InterPro" id="IPR019489">
    <property type="entry name" value="Clp_ATPase_C"/>
</dbReference>
<dbReference type="InterPro" id="IPR004487">
    <property type="entry name" value="Clp_protease_ATP-bd_su_ClpX"/>
</dbReference>
<dbReference type="InterPro" id="IPR046425">
    <property type="entry name" value="ClpX_bact"/>
</dbReference>
<dbReference type="InterPro" id="IPR027417">
    <property type="entry name" value="P-loop_NTPase"/>
</dbReference>
<dbReference type="InterPro" id="IPR010603">
    <property type="entry name" value="Znf_CppX_C4"/>
</dbReference>
<dbReference type="InterPro" id="IPR038366">
    <property type="entry name" value="Znf_CppX_C4_sf"/>
</dbReference>
<dbReference type="NCBIfam" id="TIGR00382">
    <property type="entry name" value="clpX"/>
    <property type="match status" value="1"/>
</dbReference>
<dbReference type="NCBIfam" id="NF003745">
    <property type="entry name" value="PRK05342.1"/>
    <property type="match status" value="1"/>
</dbReference>
<dbReference type="PANTHER" id="PTHR48102:SF7">
    <property type="entry name" value="ATP-DEPENDENT CLP PROTEASE ATP-BINDING SUBUNIT CLPX-LIKE, MITOCHONDRIAL"/>
    <property type="match status" value="1"/>
</dbReference>
<dbReference type="PANTHER" id="PTHR48102">
    <property type="entry name" value="ATP-DEPENDENT CLP PROTEASE ATP-BINDING SUBUNIT CLPX-LIKE, MITOCHONDRIAL-RELATED"/>
    <property type="match status" value="1"/>
</dbReference>
<dbReference type="Pfam" id="PF07724">
    <property type="entry name" value="AAA_2"/>
    <property type="match status" value="1"/>
</dbReference>
<dbReference type="Pfam" id="PF10431">
    <property type="entry name" value="ClpB_D2-small"/>
    <property type="match status" value="1"/>
</dbReference>
<dbReference type="Pfam" id="PF06689">
    <property type="entry name" value="zf-C4_ClpX"/>
    <property type="match status" value="1"/>
</dbReference>
<dbReference type="SMART" id="SM00382">
    <property type="entry name" value="AAA"/>
    <property type="match status" value="1"/>
</dbReference>
<dbReference type="SMART" id="SM01086">
    <property type="entry name" value="ClpB_D2-small"/>
    <property type="match status" value="1"/>
</dbReference>
<dbReference type="SMART" id="SM00994">
    <property type="entry name" value="zf-C4_ClpX"/>
    <property type="match status" value="1"/>
</dbReference>
<dbReference type="SUPFAM" id="SSF57716">
    <property type="entry name" value="Glucocorticoid receptor-like (DNA-binding domain)"/>
    <property type="match status" value="1"/>
</dbReference>
<dbReference type="SUPFAM" id="SSF52540">
    <property type="entry name" value="P-loop containing nucleoside triphosphate hydrolases"/>
    <property type="match status" value="1"/>
</dbReference>
<dbReference type="PROSITE" id="PS51902">
    <property type="entry name" value="CLPX_ZB"/>
    <property type="match status" value="1"/>
</dbReference>
<reference key="1">
    <citation type="journal article" date="2007" name="PLoS ONE">
        <title>Analysis of the neurotoxin complex genes in Clostridium botulinum A1-A4 and B1 strains: BoNT/A3, /Ba4 and /B1 clusters are located within plasmids.</title>
        <authorList>
            <person name="Smith T.J."/>
            <person name="Hill K.K."/>
            <person name="Foley B.T."/>
            <person name="Detter J.C."/>
            <person name="Munk A.C."/>
            <person name="Bruce D.C."/>
            <person name="Doggett N.A."/>
            <person name="Smith L.A."/>
            <person name="Marks J.D."/>
            <person name="Xie G."/>
            <person name="Brettin T.S."/>
        </authorList>
    </citation>
    <scope>NUCLEOTIDE SEQUENCE [LARGE SCALE GENOMIC DNA]</scope>
    <source>
        <strain>Loch Maree / Type A3</strain>
    </source>
</reference>
<evidence type="ECO:0000255" key="1">
    <source>
        <dbReference type="HAMAP-Rule" id="MF_00175"/>
    </source>
</evidence>
<evidence type="ECO:0000255" key="2">
    <source>
        <dbReference type="PROSITE-ProRule" id="PRU01250"/>
    </source>
</evidence>
<evidence type="ECO:0000256" key="3">
    <source>
        <dbReference type="SAM" id="MobiDB-lite"/>
    </source>
</evidence>
<proteinExistence type="inferred from homology"/>
<sequence length="429" mass="47787">MSKLDEKKQLKCSFCGKTQDQVRRLIAGPGVYICDECIELCSEIINDEFEDDIQVDLTSLPKPTEIKTYLDQYVIGQEDAKKSLSVAVYNHYKRINSNTNNDDVELQKSNILLLGPTGSGKTLLAQTLAKFLNVPFAIADATTLTEAGYVGEDVENILLKLIQNADYDIEKAEKGIVYIDEIDKIARKSENPSITRDVSGEGVQQALLKILEGTVAAVPPQGGRKHPHQEFIQINTTNILFICGGAFDGVDKIIERRTRTSSLGFGAEIQSKKEKDLGKLLKDIMPGDLLKFGLIPEFIGRLPIVVTLDKLDREALIKILTEPKNALVKQYKKLFELDDVELEFNQEALKGIADEAINRNTGARGLRAIIEDMMREIMFDIPSQENIGKVIVNEDCIKTKKPELIEAEGGKRLPIKPKKGKKRKDSETA</sequence>
<gene>
    <name evidence="1" type="primary">clpX</name>
    <name type="ordered locus">CLK_2628</name>
</gene>
<name>CLPX_CLOBM</name>
<comment type="function">
    <text evidence="1">ATP-dependent specificity component of the Clp protease. It directs the protease to specific substrates. Can perform chaperone functions in the absence of ClpP.</text>
</comment>
<comment type="subunit">
    <text evidence="1">Component of the ClpX-ClpP complex. Forms a hexameric ring that, in the presence of ATP, binds to fourteen ClpP subunits assembled into a disk-like structure with a central cavity, resembling the structure of eukaryotic proteasomes.</text>
</comment>
<comment type="similarity">
    <text evidence="1">Belongs to the ClpX chaperone family.</text>
</comment>
<keyword id="KW-0067">ATP-binding</keyword>
<keyword id="KW-0143">Chaperone</keyword>
<keyword id="KW-0479">Metal-binding</keyword>
<keyword id="KW-0547">Nucleotide-binding</keyword>
<keyword id="KW-0862">Zinc</keyword>
<accession>B1L1D6</accession>
<organism>
    <name type="scientific">Clostridium botulinum (strain Loch Maree / Type A3)</name>
    <dbReference type="NCBI Taxonomy" id="498214"/>
    <lineage>
        <taxon>Bacteria</taxon>
        <taxon>Bacillati</taxon>
        <taxon>Bacillota</taxon>
        <taxon>Clostridia</taxon>
        <taxon>Eubacteriales</taxon>
        <taxon>Clostridiaceae</taxon>
        <taxon>Clostridium</taxon>
    </lineage>
</organism>
<feature type="chain" id="PRO_1000097941" description="ATP-dependent Clp protease ATP-binding subunit ClpX">
    <location>
        <begin position="1"/>
        <end position="429"/>
    </location>
</feature>
<feature type="domain" description="ClpX-type ZB" evidence="2">
    <location>
        <begin position="1"/>
        <end position="53"/>
    </location>
</feature>
<feature type="region of interest" description="Disordered" evidence="3">
    <location>
        <begin position="408"/>
        <end position="429"/>
    </location>
</feature>
<feature type="compositionally biased region" description="Basic residues" evidence="3">
    <location>
        <begin position="413"/>
        <end position="423"/>
    </location>
</feature>
<feature type="binding site" evidence="2">
    <location>
        <position position="12"/>
    </location>
    <ligand>
        <name>Zn(2+)</name>
        <dbReference type="ChEBI" id="CHEBI:29105"/>
    </ligand>
</feature>
<feature type="binding site" evidence="2">
    <location>
        <position position="15"/>
    </location>
    <ligand>
        <name>Zn(2+)</name>
        <dbReference type="ChEBI" id="CHEBI:29105"/>
    </ligand>
</feature>
<feature type="binding site" evidence="2">
    <location>
        <position position="34"/>
    </location>
    <ligand>
        <name>Zn(2+)</name>
        <dbReference type="ChEBI" id="CHEBI:29105"/>
    </ligand>
</feature>
<feature type="binding site" evidence="2">
    <location>
        <position position="37"/>
    </location>
    <ligand>
        <name>Zn(2+)</name>
        <dbReference type="ChEBI" id="CHEBI:29105"/>
    </ligand>
</feature>
<feature type="binding site" evidence="1">
    <location>
        <begin position="116"/>
        <end position="123"/>
    </location>
    <ligand>
        <name>ATP</name>
        <dbReference type="ChEBI" id="CHEBI:30616"/>
    </ligand>
</feature>
<protein>
    <recommendedName>
        <fullName evidence="1">ATP-dependent Clp protease ATP-binding subunit ClpX</fullName>
    </recommendedName>
</protein>